<sequence length="595" mass="66299">MKMTQMYMPTLREIPNEAVVESHKLLLRAGMIRNLANGLFAYLPLGLKAFRKVEKIIREEMDAIGCLEFKPPVIVPGEIWQESGRWDSMGPELLRIKNRLNQELVVSPTAEEAFTALLKNELSSYKNYPLLTYQINTKYRDEIRPRYGLMRTREFTMKDAYSFHTNDKSLDEAYLSFEKAYIKIFKRCGLTVIGVKADSGAMGGSGSQEFMVESSVGDDTLLLCPSCGYAANEEKAACAPDKEQGNGNMPQGSALSIEEIDTPNVKTIEDLTAFLKTESSSFIKTLIYRVENSEILGNAENGKKAAKNENKTVLIAVCIRGDLEVNEAKLKSSLKASDAILASDTEVEEATGTIVGFAGPVGLKNIPVIADESVMLMHDAVTGALKKDKHLLHVEPSRDFTPAHVFDLRTVRAGDKCAVCGTALYTKKGNELGHIFKLGYKYTKAMNMTYLDENGKQQHPSMGCYGIGLDRLTASIVEEHHDEDGIIWPMSIAPFQVAIVPIKYEGEMQKEADRLYEECKKRGIEALLDDRKERTGVKFKDMDLIGIPIRLVVGEKNLPNIEFKLRKAVESSLVDKDKVVDLVEKTVKEELAKLN</sequence>
<proteinExistence type="inferred from homology"/>
<gene>
    <name evidence="1" type="primary">proS</name>
    <name type="ordered locus">TDE_2220</name>
</gene>
<name>SYP_TREDE</name>
<accession>Q73KJ8</accession>
<dbReference type="EC" id="6.1.1.15" evidence="1"/>
<dbReference type="EMBL" id="AE017226">
    <property type="protein sequence ID" value="AAS12739.1"/>
    <property type="molecule type" value="Genomic_DNA"/>
</dbReference>
<dbReference type="RefSeq" id="NP_972820.1">
    <property type="nucleotide sequence ID" value="NC_002967.9"/>
</dbReference>
<dbReference type="RefSeq" id="WP_010957184.1">
    <property type="nucleotide sequence ID" value="NC_002967.9"/>
</dbReference>
<dbReference type="SMR" id="Q73KJ8"/>
<dbReference type="STRING" id="243275.TDE_2220"/>
<dbReference type="PaxDb" id="243275-TDE_2220"/>
<dbReference type="GeneID" id="2739496"/>
<dbReference type="KEGG" id="tde:TDE_2220"/>
<dbReference type="PATRIC" id="fig|243275.7.peg.2097"/>
<dbReference type="eggNOG" id="COG0442">
    <property type="taxonomic scope" value="Bacteria"/>
</dbReference>
<dbReference type="HOGENOM" id="CLU_016739_0_0_12"/>
<dbReference type="OrthoDB" id="9809052at2"/>
<dbReference type="Proteomes" id="UP000008212">
    <property type="component" value="Chromosome"/>
</dbReference>
<dbReference type="GO" id="GO:0005829">
    <property type="term" value="C:cytosol"/>
    <property type="evidence" value="ECO:0007669"/>
    <property type="project" value="TreeGrafter"/>
</dbReference>
<dbReference type="GO" id="GO:0002161">
    <property type="term" value="F:aminoacyl-tRNA deacylase activity"/>
    <property type="evidence" value="ECO:0007669"/>
    <property type="project" value="InterPro"/>
</dbReference>
<dbReference type="GO" id="GO:0005524">
    <property type="term" value="F:ATP binding"/>
    <property type="evidence" value="ECO:0007669"/>
    <property type="project" value="UniProtKB-UniRule"/>
</dbReference>
<dbReference type="GO" id="GO:0004827">
    <property type="term" value="F:proline-tRNA ligase activity"/>
    <property type="evidence" value="ECO:0007669"/>
    <property type="project" value="UniProtKB-UniRule"/>
</dbReference>
<dbReference type="GO" id="GO:0006433">
    <property type="term" value="P:prolyl-tRNA aminoacylation"/>
    <property type="evidence" value="ECO:0007669"/>
    <property type="project" value="UniProtKB-UniRule"/>
</dbReference>
<dbReference type="CDD" id="cd04334">
    <property type="entry name" value="ProRS-INS"/>
    <property type="match status" value="1"/>
</dbReference>
<dbReference type="CDD" id="cd00861">
    <property type="entry name" value="ProRS_anticodon_short"/>
    <property type="match status" value="1"/>
</dbReference>
<dbReference type="CDD" id="cd00779">
    <property type="entry name" value="ProRS_core_prok"/>
    <property type="match status" value="1"/>
</dbReference>
<dbReference type="Gene3D" id="3.40.50.800">
    <property type="entry name" value="Anticodon-binding domain"/>
    <property type="match status" value="1"/>
</dbReference>
<dbReference type="Gene3D" id="3.30.930.10">
    <property type="entry name" value="Bira Bifunctional Protein, Domain 2"/>
    <property type="match status" value="2"/>
</dbReference>
<dbReference type="HAMAP" id="MF_01569">
    <property type="entry name" value="Pro_tRNA_synth_type1"/>
    <property type="match status" value="1"/>
</dbReference>
<dbReference type="InterPro" id="IPR002314">
    <property type="entry name" value="aa-tRNA-synt_IIb"/>
</dbReference>
<dbReference type="InterPro" id="IPR006195">
    <property type="entry name" value="aa-tRNA-synth_II"/>
</dbReference>
<dbReference type="InterPro" id="IPR045864">
    <property type="entry name" value="aa-tRNA-synth_II/BPL/LPL"/>
</dbReference>
<dbReference type="InterPro" id="IPR004154">
    <property type="entry name" value="Anticodon-bd"/>
</dbReference>
<dbReference type="InterPro" id="IPR036621">
    <property type="entry name" value="Anticodon-bd_dom_sf"/>
</dbReference>
<dbReference type="InterPro" id="IPR002316">
    <property type="entry name" value="Pro-tRNA-ligase_IIa"/>
</dbReference>
<dbReference type="InterPro" id="IPR004500">
    <property type="entry name" value="Pro-tRNA-synth_IIa_bac-type"/>
</dbReference>
<dbReference type="InterPro" id="IPR023717">
    <property type="entry name" value="Pro-tRNA-Synthase_IIa_type1"/>
</dbReference>
<dbReference type="InterPro" id="IPR050062">
    <property type="entry name" value="Pro-tRNA_synthetase"/>
</dbReference>
<dbReference type="InterPro" id="IPR044140">
    <property type="entry name" value="ProRS_anticodon_short"/>
</dbReference>
<dbReference type="InterPro" id="IPR033730">
    <property type="entry name" value="ProRS_core_prok"/>
</dbReference>
<dbReference type="InterPro" id="IPR036754">
    <property type="entry name" value="YbaK/aa-tRNA-synt-asso_dom_sf"/>
</dbReference>
<dbReference type="InterPro" id="IPR007214">
    <property type="entry name" value="YbaK/aa-tRNA-synth-assoc-dom"/>
</dbReference>
<dbReference type="NCBIfam" id="NF006625">
    <property type="entry name" value="PRK09194.1"/>
    <property type="match status" value="1"/>
</dbReference>
<dbReference type="NCBIfam" id="TIGR00409">
    <property type="entry name" value="proS_fam_II"/>
    <property type="match status" value="1"/>
</dbReference>
<dbReference type="PANTHER" id="PTHR42753">
    <property type="entry name" value="MITOCHONDRIAL RIBOSOME PROTEIN L39/PROLYL-TRNA LIGASE FAMILY MEMBER"/>
    <property type="match status" value="1"/>
</dbReference>
<dbReference type="PANTHER" id="PTHR42753:SF2">
    <property type="entry name" value="PROLINE--TRNA LIGASE"/>
    <property type="match status" value="1"/>
</dbReference>
<dbReference type="Pfam" id="PF03129">
    <property type="entry name" value="HGTP_anticodon"/>
    <property type="match status" value="1"/>
</dbReference>
<dbReference type="Pfam" id="PF00587">
    <property type="entry name" value="tRNA-synt_2b"/>
    <property type="match status" value="1"/>
</dbReference>
<dbReference type="Pfam" id="PF04073">
    <property type="entry name" value="tRNA_edit"/>
    <property type="match status" value="1"/>
</dbReference>
<dbReference type="PRINTS" id="PR01046">
    <property type="entry name" value="TRNASYNTHPRO"/>
</dbReference>
<dbReference type="SUPFAM" id="SSF52954">
    <property type="entry name" value="Class II aaRS ABD-related"/>
    <property type="match status" value="1"/>
</dbReference>
<dbReference type="SUPFAM" id="SSF55681">
    <property type="entry name" value="Class II aaRS and biotin synthetases"/>
    <property type="match status" value="1"/>
</dbReference>
<dbReference type="SUPFAM" id="SSF55826">
    <property type="entry name" value="YbaK/ProRS associated domain"/>
    <property type="match status" value="1"/>
</dbReference>
<dbReference type="PROSITE" id="PS50862">
    <property type="entry name" value="AA_TRNA_LIGASE_II"/>
    <property type="match status" value="1"/>
</dbReference>
<feature type="chain" id="PRO_0000248805" description="Proline--tRNA ligase">
    <location>
        <begin position="1"/>
        <end position="595"/>
    </location>
</feature>
<comment type="function">
    <text evidence="1">Catalyzes the attachment of proline to tRNA(Pro) in a two-step reaction: proline is first activated by ATP to form Pro-AMP and then transferred to the acceptor end of tRNA(Pro). As ProRS can inadvertently accommodate and process non-cognate amino acids such as alanine and cysteine, to avoid such errors it has two additional distinct editing activities against alanine. One activity is designated as 'pretransfer' editing and involves the tRNA(Pro)-independent hydrolysis of activated Ala-AMP. The other activity is designated 'posttransfer' editing and involves deacylation of mischarged Ala-tRNA(Pro). The misacylated Cys-tRNA(Pro) is not edited by ProRS.</text>
</comment>
<comment type="catalytic activity">
    <reaction evidence="1">
        <text>tRNA(Pro) + L-proline + ATP = L-prolyl-tRNA(Pro) + AMP + diphosphate</text>
        <dbReference type="Rhea" id="RHEA:14305"/>
        <dbReference type="Rhea" id="RHEA-COMP:9700"/>
        <dbReference type="Rhea" id="RHEA-COMP:9702"/>
        <dbReference type="ChEBI" id="CHEBI:30616"/>
        <dbReference type="ChEBI" id="CHEBI:33019"/>
        <dbReference type="ChEBI" id="CHEBI:60039"/>
        <dbReference type="ChEBI" id="CHEBI:78442"/>
        <dbReference type="ChEBI" id="CHEBI:78532"/>
        <dbReference type="ChEBI" id="CHEBI:456215"/>
        <dbReference type="EC" id="6.1.1.15"/>
    </reaction>
</comment>
<comment type="subunit">
    <text evidence="1">Homodimer.</text>
</comment>
<comment type="subcellular location">
    <subcellularLocation>
        <location evidence="1">Cytoplasm</location>
    </subcellularLocation>
</comment>
<comment type="domain">
    <text evidence="1">Consists of three domains: the N-terminal catalytic domain, the editing domain and the C-terminal anticodon-binding domain.</text>
</comment>
<comment type="similarity">
    <text evidence="1">Belongs to the class-II aminoacyl-tRNA synthetase family. ProS type 1 subfamily.</text>
</comment>
<keyword id="KW-0030">Aminoacyl-tRNA synthetase</keyword>
<keyword id="KW-0067">ATP-binding</keyword>
<keyword id="KW-0963">Cytoplasm</keyword>
<keyword id="KW-0436">Ligase</keyword>
<keyword id="KW-0547">Nucleotide-binding</keyword>
<keyword id="KW-0648">Protein biosynthesis</keyword>
<keyword id="KW-1185">Reference proteome</keyword>
<organism>
    <name type="scientific">Treponema denticola (strain ATCC 35405 / DSM 14222 / CIP 103919 / JCM 8153 / KCTC 15104)</name>
    <dbReference type="NCBI Taxonomy" id="243275"/>
    <lineage>
        <taxon>Bacteria</taxon>
        <taxon>Pseudomonadati</taxon>
        <taxon>Spirochaetota</taxon>
        <taxon>Spirochaetia</taxon>
        <taxon>Spirochaetales</taxon>
        <taxon>Treponemataceae</taxon>
        <taxon>Treponema</taxon>
    </lineage>
</organism>
<evidence type="ECO:0000255" key="1">
    <source>
        <dbReference type="HAMAP-Rule" id="MF_01569"/>
    </source>
</evidence>
<protein>
    <recommendedName>
        <fullName evidence="1">Proline--tRNA ligase</fullName>
        <ecNumber evidence="1">6.1.1.15</ecNumber>
    </recommendedName>
    <alternativeName>
        <fullName evidence="1">Prolyl-tRNA synthetase</fullName>
        <shortName evidence="1">ProRS</shortName>
    </alternativeName>
</protein>
<reference key="1">
    <citation type="journal article" date="2004" name="Proc. Natl. Acad. Sci. U.S.A.">
        <title>Comparison of the genome of the oral pathogen Treponema denticola with other spirochete genomes.</title>
        <authorList>
            <person name="Seshadri R."/>
            <person name="Myers G.S.A."/>
            <person name="Tettelin H."/>
            <person name="Eisen J.A."/>
            <person name="Heidelberg J.F."/>
            <person name="Dodson R.J."/>
            <person name="Davidsen T.M."/>
            <person name="DeBoy R.T."/>
            <person name="Fouts D.E."/>
            <person name="Haft D.H."/>
            <person name="Selengut J."/>
            <person name="Ren Q."/>
            <person name="Brinkac L.M."/>
            <person name="Madupu R."/>
            <person name="Kolonay J.F."/>
            <person name="Durkin S.A."/>
            <person name="Daugherty S.C."/>
            <person name="Shetty J."/>
            <person name="Shvartsbeyn A."/>
            <person name="Gebregeorgis E."/>
            <person name="Geer K."/>
            <person name="Tsegaye G."/>
            <person name="Malek J.A."/>
            <person name="Ayodeji B."/>
            <person name="Shatsman S."/>
            <person name="McLeod M.P."/>
            <person name="Smajs D."/>
            <person name="Howell J.K."/>
            <person name="Pal S."/>
            <person name="Amin A."/>
            <person name="Vashisth P."/>
            <person name="McNeill T.Z."/>
            <person name="Xiang Q."/>
            <person name="Sodergren E."/>
            <person name="Baca E."/>
            <person name="Weinstock G.M."/>
            <person name="Norris S.J."/>
            <person name="Fraser C.M."/>
            <person name="Paulsen I.T."/>
        </authorList>
    </citation>
    <scope>NUCLEOTIDE SEQUENCE [LARGE SCALE GENOMIC DNA]</scope>
    <source>
        <strain>ATCC 35405 / DSM 14222 / CIP 103919 / JCM 8153 / KCTC 15104</strain>
    </source>
</reference>